<comment type="function">
    <text evidence="1">Catalyzes the isomerization of sedoheptulose 7-phosphate in D-glycero-D-manno-heptose 7-phosphate.</text>
</comment>
<comment type="catalytic activity">
    <reaction evidence="1">
        <text>2 D-sedoheptulose 7-phosphate = D-glycero-alpha-D-manno-heptose 7-phosphate + D-glycero-beta-D-manno-heptose 7-phosphate</text>
        <dbReference type="Rhea" id="RHEA:27489"/>
        <dbReference type="ChEBI" id="CHEBI:57483"/>
        <dbReference type="ChEBI" id="CHEBI:60203"/>
        <dbReference type="ChEBI" id="CHEBI:60204"/>
        <dbReference type="EC" id="5.3.1.28"/>
    </reaction>
</comment>
<comment type="cofactor">
    <cofactor evidence="1">
        <name>Zn(2+)</name>
        <dbReference type="ChEBI" id="CHEBI:29105"/>
    </cofactor>
    <text evidence="1">Binds 1 zinc ion per subunit.</text>
</comment>
<comment type="pathway">
    <text evidence="1">Carbohydrate biosynthesis; D-glycero-D-manno-heptose 7-phosphate biosynthesis; D-glycero-alpha-D-manno-heptose 7-phosphate and D-glycero-beta-D-manno-heptose 7-phosphate from sedoheptulose 7-phosphate: step 1/1.</text>
</comment>
<comment type="subunit">
    <text evidence="1">Homotetramer.</text>
</comment>
<comment type="subcellular location">
    <subcellularLocation>
        <location evidence="1">Cytoplasm</location>
    </subcellularLocation>
</comment>
<comment type="miscellaneous">
    <text evidence="1">The reaction produces a racemic mixture of D-glycero-alpha-D-manno-heptose 7-phosphate and D-glycero-beta-D-manno-heptose 7-phosphate.</text>
</comment>
<comment type="similarity">
    <text evidence="1">Belongs to the SIS family. GmhA subfamily.</text>
</comment>
<gene>
    <name evidence="1" type="primary">gmhA</name>
    <name type="ordered locus">BUAP5A_245</name>
</gene>
<sequence>MYKKIIFSEFNSASKILKNFLEDKKQIENIQKAAILIAQSFKNEKKVISCGNGGSHCDAVHFSEELTSVYRKKRSGYPAISISDSSYISAVGNDFGYDQIFSRFIQSVGHLGDILLAISTSGNSLNIVRAIEEAKKKKMKVIVLTGNNAGKIKNLSDIEICIPHCGYSDRIQEMHIKIIHILILIIEKEMQKN</sequence>
<keyword id="KW-0119">Carbohydrate metabolism</keyword>
<keyword id="KW-0963">Cytoplasm</keyword>
<keyword id="KW-0413">Isomerase</keyword>
<keyword id="KW-0479">Metal-binding</keyword>
<keyword id="KW-0862">Zinc</keyword>
<accession>B8D943</accession>
<proteinExistence type="inferred from homology"/>
<reference key="1">
    <citation type="journal article" date="2009" name="Science">
        <title>The dynamics and time scale of ongoing genomic erosion in symbiotic bacteria.</title>
        <authorList>
            <person name="Moran N.A."/>
            <person name="McLaughlin H.J."/>
            <person name="Sorek R."/>
        </authorList>
    </citation>
    <scope>NUCLEOTIDE SEQUENCE [LARGE SCALE GENOMIC DNA]</scope>
    <source>
        <strain>5A</strain>
    </source>
</reference>
<protein>
    <recommendedName>
        <fullName evidence="1">Phosphoheptose isomerase</fullName>
        <ecNumber evidence="1">5.3.1.28</ecNumber>
    </recommendedName>
    <alternativeName>
        <fullName evidence="1">Sedoheptulose 7-phosphate isomerase</fullName>
    </alternativeName>
</protein>
<dbReference type="EC" id="5.3.1.28" evidence="1"/>
<dbReference type="EMBL" id="CP001161">
    <property type="protein sequence ID" value="ACL30614.1"/>
    <property type="molecule type" value="Genomic_DNA"/>
</dbReference>
<dbReference type="SMR" id="B8D943"/>
<dbReference type="KEGG" id="bap:BUAP5A_245"/>
<dbReference type="HOGENOM" id="CLU_080999_4_0_6"/>
<dbReference type="OrthoDB" id="9810929at2"/>
<dbReference type="UniPathway" id="UPA00041">
    <property type="reaction ID" value="UER00436"/>
</dbReference>
<dbReference type="Proteomes" id="UP000006904">
    <property type="component" value="Chromosome"/>
</dbReference>
<dbReference type="GO" id="GO:0005737">
    <property type="term" value="C:cytoplasm"/>
    <property type="evidence" value="ECO:0007669"/>
    <property type="project" value="UniProtKB-SubCell"/>
</dbReference>
<dbReference type="GO" id="GO:0097367">
    <property type="term" value="F:carbohydrate derivative binding"/>
    <property type="evidence" value="ECO:0007669"/>
    <property type="project" value="InterPro"/>
</dbReference>
<dbReference type="GO" id="GO:0008968">
    <property type="term" value="F:D-sedoheptulose 7-phosphate isomerase activity"/>
    <property type="evidence" value="ECO:0007669"/>
    <property type="project" value="UniProtKB-UniRule"/>
</dbReference>
<dbReference type="GO" id="GO:0008270">
    <property type="term" value="F:zinc ion binding"/>
    <property type="evidence" value="ECO:0007669"/>
    <property type="project" value="UniProtKB-UniRule"/>
</dbReference>
<dbReference type="GO" id="GO:0005975">
    <property type="term" value="P:carbohydrate metabolic process"/>
    <property type="evidence" value="ECO:0007669"/>
    <property type="project" value="UniProtKB-UniRule"/>
</dbReference>
<dbReference type="GO" id="GO:2001061">
    <property type="term" value="P:D-glycero-D-manno-heptose 7-phosphate biosynthetic process"/>
    <property type="evidence" value="ECO:0007669"/>
    <property type="project" value="UniProtKB-UniPathway"/>
</dbReference>
<dbReference type="CDD" id="cd05006">
    <property type="entry name" value="SIS_GmhA"/>
    <property type="match status" value="1"/>
</dbReference>
<dbReference type="Gene3D" id="3.40.50.10490">
    <property type="entry name" value="Glucose-6-phosphate isomerase like protein, domain 1"/>
    <property type="match status" value="1"/>
</dbReference>
<dbReference type="HAMAP" id="MF_00067">
    <property type="entry name" value="GmhA"/>
    <property type="match status" value="1"/>
</dbReference>
<dbReference type="InterPro" id="IPR035461">
    <property type="entry name" value="GmhA/DiaA"/>
</dbReference>
<dbReference type="InterPro" id="IPR004515">
    <property type="entry name" value="Phosphoheptose_Isoase"/>
</dbReference>
<dbReference type="InterPro" id="IPR001347">
    <property type="entry name" value="SIS_dom"/>
</dbReference>
<dbReference type="InterPro" id="IPR046348">
    <property type="entry name" value="SIS_dom_sf"/>
</dbReference>
<dbReference type="InterPro" id="IPR050099">
    <property type="entry name" value="SIS_GmhA/DiaA_subfam"/>
</dbReference>
<dbReference type="NCBIfam" id="TIGR00441">
    <property type="entry name" value="gmhA"/>
    <property type="match status" value="1"/>
</dbReference>
<dbReference type="NCBIfam" id="NF001628">
    <property type="entry name" value="PRK00414.1"/>
    <property type="match status" value="1"/>
</dbReference>
<dbReference type="PANTHER" id="PTHR30390:SF7">
    <property type="entry name" value="PHOSPHOHEPTOSE ISOMERASE"/>
    <property type="match status" value="1"/>
</dbReference>
<dbReference type="PANTHER" id="PTHR30390">
    <property type="entry name" value="SEDOHEPTULOSE 7-PHOSPHATE ISOMERASE / DNAA INITIATOR-ASSOCIATING FACTOR FOR REPLICATION INITIATION"/>
    <property type="match status" value="1"/>
</dbReference>
<dbReference type="Pfam" id="PF13580">
    <property type="entry name" value="SIS_2"/>
    <property type="match status" value="1"/>
</dbReference>
<dbReference type="SUPFAM" id="SSF53697">
    <property type="entry name" value="SIS domain"/>
    <property type="match status" value="1"/>
</dbReference>
<dbReference type="PROSITE" id="PS51464">
    <property type="entry name" value="SIS"/>
    <property type="match status" value="1"/>
</dbReference>
<name>GMHA_BUCA5</name>
<evidence type="ECO:0000255" key="1">
    <source>
        <dbReference type="HAMAP-Rule" id="MF_00067"/>
    </source>
</evidence>
<organism>
    <name type="scientific">Buchnera aphidicola subsp. Acyrthosiphon pisum (strain 5A)</name>
    <dbReference type="NCBI Taxonomy" id="563178"/>
    <lineage>
        <taxon>Bacteria</taxon>
        <taxon>Pseudomonadati</taxon>
        <taxon>Pseudomonadota</taxon>
        <taxon>Gammaproteobacteria</taxon>
        <taxon>Enterobacterales</taxon>
        <taxon>Erwiniaceae</taxon>
        <taxon>Buchnera</taxon>
    </lineage>
</organism>
<feature type="chain" id="PRO_1000196990" description="Phosphoheptose isomerase">
    <location>
        <begin position="1"/>
        <end position="193"/>
    </location>
</feature>
<feature type="domain" description="SIS" evidence="1">
    <location>
        <begin position="37"/>
        <end position="193"/>
    </location>
</feature>
<feature type="binding site" evidence="1">
    <location>
        <begin position="52"/>
        <end position="54"/>
    </location>
    <ligand>
        <name>substrate</name>
    </ligand>
</feature>
<feature type="binding site" evidence="1">
    <location>
        <position position="61"/>
    </location>
    <ligand>
        <name>Zn(2+)</name>
        <dbReference type="ChEBI" id="CHEBI:29105"/>
    </ligand>
</feature>
<feature type="binding site" evidence="1">
    <location>
        <position position="65"/>
    </location>
    <ligand>
        <name>substrate</name>
    </ligand>
</feature>
<feature type="binding site" evidence="1">
    <location>
        <position position="65"/>
    </location>
    <ligand>
        <name>Zn(2+)</name>
        <dbReference type="ChEBI" id="CHEBI:29105"/>
    </ligand>
</feature>
<feature type="binding site" evidence="1">
    <location>
        <begin position="93"/>
        <end position="94"/>
    </location>
    <ligand>
        <name>substrate</name>
    </ligand>
</feature>
<feature type="binding site" evidence="1">
    <location>
        <begin position="119"/>
        <end position="121"/>
    </location>
    <ligand>
        <name>substrate</name>
    </ligand>
</feature>
<feature type="binding site" evidence="1">
    <location>
        <position position="124"/>
    </location>
    <ligand>
        <name>substrate</name>
    </ligand>
</feature>
<feature type="binding site" evidence="1">
    <location>
        <position position="172"/>
    </location>
    <ligand>
        <name>substrate</name>
    </ligand>
</feature>
<feature type="binding site" evidence="1">
    <location>
        <position position="172"/>
    </location>
    <ligand>
        <name>Zn(2+)</name>
        <dbReference type="ChEBI" id="CHEBI:29105"/>
    </ligand>
</feature>
<feature type="binding site" evidence="1">
    <location>
        <position position="180"/>
    </location>
    <ligand>
        <name>Zn(2+)</name>
        <dbReference type="ChEBI" id="CHEBI:29105"/>
    </ligand>
</feature>